<sequence>MKYDIIGDIHGCLQEFQNLTEKLGYNWSSGLPVHPDQRKLAFVGDITDRGPHSLRMIEIVWELVIHKKVAYYAPGNHCNKLYRFFLGRNVTIAHGLETTVAEYEALPSHKQNMIKEKFITLYEQSPLYHVLDEKRLLVCHAGIRQDYIGRQDKKVQTFVLYGDITGEKHADGSPVRRDWAKEYKGTTWIVYGHTPVKEPRFVNHTVNIDTGAVFGGKLTGLRYPEMEIVSVPSSLPFVPEKFRPIS</sequence>
<organism>
    <name type="scientific">Bacillus cereus (strain AH187)</name>
    <dbReference type="NCBI Taxonomy" id="405534"/>
    <lineage>
        <taxon>Bacteria</taxon>
        <taxon>Bacillati</taxon>
        <taxon>Bacillota</taxon>
        <taxon>Bacilli</taxon>
        <taxon>Bacillales</taxon>
        <taxon>Bacillaceae</taxon>
        <taxon>Bacillus</taxon>
        <taxon>Bacillus cereus group</taxon>
    </lineage>
</organism>
<reference key="1">
    <citation type="submission" date="2008-10" db="EMBL/GenBank/DDBJ databases">
        <title>Genome sequence of Bacillus cereus AH187.</title>
        <authorList>
            <person name="Dodson R.J."/>
            <person name="Durkin A.S."/>
            <person name="Rosovitz M.J."/>
            <person name="Rasko D.A."/>
            <person name="Kolsto A.B."/>
            <person name="Okstad O.A."/>
            <person name="Ravel J."/>
            <person name="Sutton G."/>
        </authorList>
    </citation>
    <scope>NUCLEOTIDE SEQUENCE [LARGE SCALE GENOMIC DNA]</scope>
    <source>
        <strain>AH187</strain>
    </source>
</reference>
<comment type="function">
    <text evidence="1">Asymmetrically hydrolyzes Ap4p to yield AMP and ATP.</text>
</comment>
<comment type="catalytic activity">
    <reaction evidence="1">
        <text>P(1),P(4)-bis(5'-guanosyl) tetraphosphate + H2O = GMP + GTP + 2 H(+)</text>
        <dbReference type="Rhea" id="RHEA:22484"/>
        <dbReference type="ChEBI" id="CHEBI:15377"/>
        <dbReference type="ChEBI" id="CHEBI:15378"/>
        <dbReference type="ChEBI" id="CHEBI:37565"/>
        <dbReference type="ChEBI" id="CHEBI:57553"/>
        <dbReference type="ChEBI" id="CHEBI:58115"/>
        <dbReference type="EC" id="3.6.1.17"/>
    </reaction>
</comment>
<comment type="cofactor">
    <cofactor evidence="1">
        <name>Ni(2+)</name>
        <dbReference type="ChEBI" id="CHEBI:49786"/>
    </cofactor>
</comment>
<comment type="similarity">
    <text evidence="1">Belongs to the PrpE family.</text>
</comment>
<feature type="chain" id="PRO_1000145930" description="Bis(5'-nucleosyl)-tetraphosphatase PrpE [asymmetrical]">
    <location>
        <begin position="1"/>
        <end position="246"/>
    </location>
</feature>
<dbReference type="EC" id="3.6.1.17" evidence="1"/>
<dbReference type="EMBL" id="CP001177">
    <property type="protein sequence ID" value="ACJ77521.1"/>
    <property type="molecule type" value="Genomic_DNA"/>
</dbReference>
<dbReference type="SMR" id="B7I0B6"/>
<dbReference type="KEGG" id="bcr:BCAH187_A1362"/>
<dbReference type="HOGENOM" id="CLU_023125_3_0_9"/>
<dbReference type="Proteomes" id="UP000002214">
    <property type="component" value="Chromosome"/>
</dbReference>
<dbReference type="GO" id="GO:0005737">
    <property type="term" value="C:cytoplasm"/>
    <property type="evidence" value="ECO:0007669"/>
    <property type="project" value="TreeGrafter"/>
</dbReference>
<dbReference type="GO" id="GO:0004081">
    <property type="term" value="F:bis(5'-nucleosyl)-tetraphosphatase (asymmetrical) activity"/>
    <property type="evidence" value="ECO:0007669"/>
    <property type="project" value="UniProtKB-UniRule"/>
</dbReference>
<dbReference type="GO" id="GO:0016151">
    <property type="term" value="F:nickel cation binding"/>
    <property type="evidence" value="ECO:0007669"/>
    <property type="project" value="UniProtKB-UniRule"/>
</dbReference>
<dbReference type="GO" id="GO:0016791">
    <property type="term" value="F:phosphatase activity"/>
    <property type="evidence" value="ECO:0007669"/>
    <property type="project" value="TreeGrafter"/>
</dbReference>
<dbReference type="CDD" id="cd07423">
    <property type="entry name" value="MPP_Prp_like"/>
    <property type="match status" value="1"/>
</dbReference>
<dbReference type="Gene3D" id="3.60.21.10">
    <property type="match status" value="1"/>
</dbReference>
<dbReference type="HAMAP" id="MF_01443">
    <property type="entry name" value="PrpE"/>
    <property type="match status" value="1"/>
</dbReference>
<dbReference type="InterPro" id="IPR050126">
    <property type="entry name" value="Ap4A_hydrolase"/>
</dbReference>
<dbReference type="InterPro" id="IPR023937">
    <property type="entry name" value="Bis(5'-nucleosyl)-tetraP_PrpE"/>
</dbReference>
<dbReference type="InterPro" id="IPR004843">
    <property type="entry name" value="Calcineurin-like_PHP_ApaH"/>
</dbReference>
<dbReference type="InterPro" id="IPR029052">
    <property type="entry name" value="Metallo-depent_PP-like"/>
</dbReference>
<dbReference type="InterPro" id="IPR041780">
    <property type="entry name" value="MPP_PrpE-like"/>
</dbReference>
<dbReference type="NCBIfam" id="NF010148">
    <property type="entry name" value="PRK13625.1"/>
    <property type="match status" value="1"/>
</dbReference>
<dbReference type="PANTHER" id="PTHR42850:SF7">
    <property type="entry name" value="BIS(5'-NUCLEOSYL)-TETRAPHOSPHATASE PRPE [ASYMMETRICAL]"/>
    <property type="match status" value="1"/>
</dbReference>
<dbReference type="PANTHER" id="PTHR42850">
    <property type="entry name" value="METALLOPHOSPHOESTERASE"/>
    <property type="match status" value="1"/>
</dbReference>
<dbReference type="Pfam" id="PF00149">
    <property type="entry name" value="Metallophos"/>
    <property type="match status" value="1"/>
</dbReference>
<dbReference type="SUPFAM" id="SSF56300">
    <property type="entry name" value="Metallo-dependent phosphatases"/>
    <property type="match status" value="1"/>
</dbReference>
<protein>
    <recommendedName>
        <fullName evidence="1">Bis(5'-nucleosyl)-tetraphosphatase PrpE [asymmetrical]</fullName>
        <ecNumber evidence="1">3.6.1.17</ecNumber>
    </recommendedName>
    <alternativeName>
        <fullName evidence="1">Ap4A hydrolase</fullName>
    </alternativeName>
    <alternativeName>
        <fullName evidence="1">Diadenosine 5',5'''-P1,P4-tetraphosphate asymmetrical hydrolase</fullName>
        <shortName evidence="1">Diadenosine tetraphosphatase</shortName>
    </alternativeName>
</protein>
<keyword id="KW-0378">Hydrolase</keyword>
<keyword id="KW-0533">Nickel</keyword>
<accession>B7I0B6</accession>
<gene>
    <name evidence="1" type="primary">prpE</name>
    <name type="ordered locus">BCAH187_A1362</name>
</gene>
<name>PRPE_BACC7</name>
<evidence type="ECO:0000255" key="1">
    <source>
        <dbReference type="HAMAP-Rule" id="MF_01443"/>
    </source>
</evidence>
<proteinExistence type="inferred from homology"/>